<accession>Q5ZZT0</accession>
<feature type="chain" id="PRO_0000174995" description="Thymidine kinase">
    <location>
        <begin position="1"/>
        <end position="184"/>
    </location>
</feature>
<feature type="active site" description="Proton acceptor" evidence="1">
    <location>
        <position position="90"/>
    </location>
</feature>
<feature type="binding site" evidence="1">
    <location>
        <begin position="15"/>
        <end position="22"/>
    </location>
    <ligand>
        <name>ATP</name>
        <dbReference type="ChEBI" id="CHEBI:30616"/>
    </ligand>
</feature>
<feature type="binding site" evidence="1">
    <location>
        <begin position="89"/>
        <end position="92"/>
    </location>
    <ligand>
        <name>ATP</name>
        <dbReference type="ChEBI" id="CHEBI:30616"/>
    </ligand>
</feature>
<feature type="binding site" evidence="1">
    <location>
        <position position="146"/>
    </location>
    <ligand>
        <name>Zn(2+)</name>
        <dbReference type="ChEBI" id="CHEBI:29105"/>
    </ligand>
</feature>
<feature type="binding site" evidence="1">
    <location>
        <position position="149"/>
    </location>
    <ligand>
        <name>Zn(2+)</name>
        <dbReference type="ChEBI" id="CHEBI:29105"/>
    </ligand>
</feature>
<feature type="binding site" evidence="1">
    <location>
        <position position="178"/>
    </location>
    <ligand>
        <name>Zn(2+)</name>
        <dbReference type="ChEBI" id="CHEBI:29105"/>
    </ligand>
</feature>
<feature type="binding site" evidence="1">
    <location>
        <position position="181"/>
    </location>
    <ligand>
        <name>Zn(2+)</name>
        <dbReference type="ChEBI" id="CHEBI:29105"/>
    </ligand>
</feature>
<name>KITH_MESH2</name>
<keyword id="KW-0067">ATP-binding</keyword>
<keyword id="KW-0963">Cytoplasm</keyword>
<keyword id="KW-0237">DNA synthesis</keyword>
<keyword id="KW-0418">Kinase</keyword>
<keyword id="KW-0479">Metal-binding</keyword>
<keyword id="KW-0547">Nucleotide-binding</keyword>
<keyword id="KW-0808">Transferase</keyword>
<keyword id="KW-0862">Zinc</keyword>
<organism>
    <name type="scientific">Mesomycoplasma hyopneumoniae (strain 232)</name>
    <name type="common">Mycoplasma hyopneumoniae</name>
    <dbReference type="NCBI Taxonomy" id="295358"/>
    <lineage>
        <taxon>Bacteria</taxon>
        <taxon>Bacillati</taxon>
        <taxon>Mycoplasmatota</taxon>
        <taxon>Mycoplasmoidales</taxon>
        <taxon>Metamycoplasmataceae</taxon>
        <taxon>Mesomycoplasma</taxon>
    </lineage>
</organism>
<reference key="1">
    <citation type="journal article" date="2004" name="J. Bacteriol.">
        <title>The genome sequence of Mycoplasma hyopneumoniae strain 232, the agent of swine mycoplasmosis.</title>
        <authorList>
            <person name="Minion F.C."/>
            <person name="Lefkowitz E.J."/>
            <person name="Madsen M.L."/>
            <person name="Cleary B.J."/>
            <person name="Swartzell S.M."/>
            <person name="Mahairas G.G."/>
        </authorList>
    </citation>
    <scope>NUCLEOTIDE SEQUENCE [LARGE SCALE GENOMIC DNA]</scope>
    <source>
        <strain>232</strain>
    </source>
</reference>
<comment type="catalytic activity">
    <reaction evidence="1">
        <text>thymidine + ATP = dTMP + ADP + H(+)</text>
        <dbReference type="Rhea" id="RHEA:19129"/>
        <dbReference type="ChEBI" id="CHEBI:15378"/>
        <dbReference type="ChEBI" id="CHEBI:17748"/>
        <dbReference type="ChEBI" id="CHEBI:30616"/>
        <dbReference type="ChEBI" id="CHEBI:63528"/>
        <dbReference type="ChEBI" id="CHEBI:456216"/>
        <dbReference type="EC" id="2.7.1.21"/>
    </reaction>
</comment>
<comment type="subunit">
    <text evidence="1">Homotetramer.</text>
</comment>
<comment type="subcellular location">
    <subcellularLocation>
        <location evidence="1">Cytoplasm</location>
    </subcellularLocation>
</comment>
<comment type="similarity">
    <text evidence="1">Belongs to the thymidine kinase family.</text>
</comment>
<evidence type="ECO:0000255" key="1">
    <source>
        <dbReference type="HAMAP-Rule" id="MF_00124"/>
    </source>
</evidence>
<gene>
    <name evidence="1" type="primary">tdk</name>
    <name type="ordered locus">mhp627</name>
</gene>
<protein>
    <recommendedName>
        <fullName evidence="1">Thymidine kinase</fullName>
        <ecNumber evidence="1">2.7.1.21</ecNumber>
    </recommendedName>
</protein>
<dbReference type="EC" id="2.7.1.21" evidence="1"/>
<dbReference type="EMBL" id="AE017332">
    <property type="protein sequence ID" value="AAV27647.1"/>
    <property type="molecule type" value="Genomic_DNA"/>
</dbReference>
<dbReference type="RefSeq" id="WP_011206458.1">
    <property type="nucleotide sequence ID" value="NC_006360.1"/>
</dbReference>
<dbReference type="SMR" id="Q5ZZT0"/>
<dbReference type="GeneID" id="41334911"/>
<dbReference type="KEGG" id="mhy:mhp627"/>
<dbReference type="eggNOG" id="COG1435">
    <property type="taxonomic scope" value="Bacteria"/>
</dbReference>
<dbReference type="HOGENOM" id="CLU_064400_3_0_14"/>
<dbReference type="PhylomeDB" id="Q5ZZT0"/>
<dbReference type="Proteomes" id="UP000006822">
    <property type="component" value="Chromosome"/>
</dbReference>
<dbReference type="GO" id="GO:0005737">
    <property type="term" value="C:cytoplasm"/>
    <property type="evidence" value="ECO:0007669"/>
    <property type="project" value="UniProtKB-SubCell"/>
</dbReference>
<dbReference type="GO" id="GO:0005524">
    <property type="term" value="F:ATP binding"/>
    <property type="evidence" value="ECO:0007669"/>
    <property type="project" value="UniProtKB-UniRule"/>
</dbReference>
<dbReference type="GO" id="GO:0004797">
    <property type="term" value="F:thymidine kinase activity"/>
    <property type="evidence" value="ECO:0007669"/>
    <property type="project" value="UniProtKB-UniRule"/>
</dbReference>
<dbReference type="GO" id="GO:0008270">
    <property type="term" value="F:zinc ion binding"/>
    <property type="evidence" value="ECO:0007669"/>
    <property type="project" value="UniProtKB-UniRule"/>
</dbReference>
<dbReference type="GO" id="GO:0071897">
    <property type="term" value="P:DNA biosynthetic process"/>
    <property type="evidence" value="ECO:0007669"/>
    <property type="project" value="UniProtKB-KW"/>
</dbReference>
<dbReference type="GO" id="GO:0046104">
    <property type="term" value="P:thymidine metabolic process"/>
    <property type="evidence" value="ECO:0007669"/>
    <property type="project" value="TreeGrafter"/>
</dbReference>
<dbReference type="Gene3D" id="3.30.60.20">
    <property type="match status" value="1"/>
</dbReference>
<dbReference type="Gene3D" id="3.40.50.300">
    <property type="entry name" value="P-loop containing nucleotide triphosphate hydrolases"/>
    <property type="match status" value="1"/>
</dbReference>
<dbReference type="HAMAP" id="MF_00124">
    <property type="entry name" value="Thymidine_kinase"/>
    <property type="match status" value="1"/>
</dbReference>
<dbReference type="InterPro" id="IPR027417">
    <property type="entry name" value="P-loop_NTPase"/>
</dbReference>
<dbReference type="InterPro" id="IPR001267">
    <property type="entry name" value="Thymidine_kinase"/>
</dbReference>
<dbReference type="InterPro" id="IPR020633">
    <property type="entry name" value="Thymidine_kinase_CS"/>
</dbReference>
<dbReference type="NCBIfam" id="NF003296">
    <property type="entry name" value="PRK04296.1-1"/>
    <property type="match status" value="1"/>
</dbReference>
<dbReference type="PANTHER" id="PTHR11441">
    <property type="entry name" value="THYMIDINE KINASE"/>
    <property type="match status" value="1"/>
</dbReference>
<dbReference type="PANTHER" id="PTHR11441:SF0">
    <property type="entry name" value="THYMIDINE KINASE, CYTOSOLIC"/>
    <property type="match status" value="1"/>
</dbReference>
<dbReference type="Pfam" id="PF00265">
    <property type="entry name" value="TK"/>
    <property type="match status" value="1"/>
</dbReference>
<dbReference type="PIRSF" id="PIRSF035805">
    <property type="entry name" value="TK_cell"/>
    <property type="match status" value="1"/>
</dbReference>
<dbReference type="SUPFAM" id="SSF57716">
    <property type="entry name" value="Glucocorticoid receptor-like (DNA-binding domain)"/>
    <property type="match status" value="1"/>
</dbReference>
<dbReference type="SUPFAM" id="SSF52540">
    <property type="entry name" value="P-loop containing nucleoside triphosphate hydrolases"/>
    <property type="match status" value="1"/>
</dbReference>
<dbReference type="PROSITE" id="PS00603">
    <property type="entry name" value="TK_CELLULAR_TYPE"/>
    <property type="match status" value="1"/>
</dbReference>
<proteinExistence type="inferred from homology"/>
<sequence>MYKKFFDGVIEVITGPMFSGKSDELIKRIKILTYADIKTLVIKPSVDYRFSQCEIVSRSGLKIPTFLARTTQEIRDLFTRDNYQAIAIDEIQFFDEEIVTFLEQIADKGIRVIVSGLDQDFRRKPFGSLPNLMAIAENVTKLQAVCSLCKRAATTTARKVLNEAQTLIGDQDEYEARCRACHSL</sequence>